<organism>
    <name type="scientific">Mycobacterium sp. (strain JLS)</name>
    <dbReference type="NCBI Taxonomy" id="164757"/>
    <lineage>
        <taxon>Bacteria</taxon>
        <taxon>Bacillati</taxon>
        <taxon>Actinomycetota</taxon>
        <taxon>Actinomycetes</taxon>
        <taxon>Mycobacteriales</taxon>
        <taxon>Mycobacteriaceae</taxon>
        <taxon>Mycobacterium</taxon>
    </lineage>
</organism>
<accession>A3PVD6</accession>
<protein>
    <recommendedName>
        <fullName evidence="1">Large ribosomal subunit protein uL24</fullName>
    </recommendedName>
    <alternativeName>
        <fullName evidence="2">50S ribosomal protein L24</fullName>
    </alternativeName>
</protein>
<keyword id="KW-0687">Ribonucleoprotein</keyword>
<keyword id="KW-0689">Ribosomal protein</keyword>
<keyword id="KW-0694">RNA-binding</keyword>
<keyword id="KW-0699">rRNA-binding</keyword>
<reference key="1">
    <citation type="submission" date="2007-02" db="EMBL/GenBank/DDBJ databases">
        <title>Complete sequence of Mycobacterium sp. JLS.</title>
        <authorList>
            <consortium name="US DOE Joint Genome Institute"/>
            <person name="Copeland A."/>
            <person name="Lucas S."/>
            <person name="Lapidus A."/>
            <person name="Barry K."/>
            <person name="Detter J.C."/>
            <person name="Glavina del Rio T."/>
            <person name="Hammon N."/>
            <person name="Israni S."/>
            <person name="Dalin E."/>
            <person name="Tice H."/>
            <person name="Pitluck S."/>
            <person name="Chain P."/>
            <person name="Malfatti S."/>
            <person name="Shin M."/>
            <person name="Vergez L."/>
            <person name="Schmutz J."/>
            <person name="Larimer F."/>
            <person name="Land M."/>
            <person name="Hauser L."/>
            <person name="Kyrpides N."/>
            <person name="Mikhailova N."/>
            <person name="Miller C.D."/>
            <person name="Anderson A.J."/>
            <person name="Sims R.C."/>
            <person name="Richardson P."/>
        </authorList>
    </citation>
    <scope>NUCLEOTIDE SEQUENCE [LARGE SCALE GENOMIC DNA]</scope>
    <source>
        <strain>JLS</strain>
    </source>
</reference>
<name>RL24_MYCSJ</name>
<feature type="chain" id="PRO_1000052260" description="Large ribosomal subunit protein uL24">
    <location>
        <begin position="1"/>
        <end position="105"/>
    </location>
</feature>
<sequence>MKVHKGDTVLVVSGKDKGAKGKVIQAYPTRNKVLVEGVNRIKKHTAVSSNERGASSGGIVTQEAPIHVSNVMVVDSDGNPTRIGYRVDEETGKKVRVSKRNGKDI</sequence>
<dbReference type="EMBL" id="CP000580">
    <property type="protein sequence ID" value="ABN96863.1"/>
    <property type="molecule type" value="Genomic_DNA"/>
</dbReference>
<dbReference type="SMR" id="A3PVD6"/>
<dbReference type="KEGG" id="mjl:Mjls_1055"/>
<dbReference type="HOGENOM" id="CLU_093315_2_0_11"/>
<dbReference type="BioCyc" id="MSP164757:G1G8C-1068-MONOMER"/>
<dbReference type="GO" id="GO:1990904">
    <property type="term" value="C:ribonucleoprotein complex"/>
    <property type="evidence" value="ECO:0007669"/>
    <property type="project" value="UniProtKB-KW"/>
</dbReference>
<dbReference type="GO" id="GO:0005840">
    <property type="term" value="C:ribosome"/>
    <property type="evidence" value="ECO:0007669"/>
    <property type="project" value="UniProtKB-KW"/>
</dbReference>
<dbReference type="GO" id="GO:0019843">
    <property type="term" value="F:rRNA binding"/>
    <property type="evidence" value="ECO:0007669"/>
    <property type="project" value="UniProtKB-UniRule"/>
</dbReference>
<dbReference type="GO" id="GO:0003735">
    <property type="term" value="F:structural constituent of ribosome"/>
    <property type="evidence" value="ECO:0007669"/>
    <property type="project" value="InterPro"/>
</dbReference>
<dbReference type="GO" id="GO:0006412">
    <property type="term" value="P:translation"/>
    <property type="evidence" value="ECO:0007669"/>
    <property type="project" value="UniProtKB-UniRule"/>
</dbReference>
<dbReference type="CDD" id="cd06089">
    <property type="entry name" value="KOW_RPL26"/>
    <property type="match status" value="1"/>
</dbReference>
<dbReference type="FunFam" id="2.30.30.30:FF:000004">
    <property type="entry name" value="50S ribosomal protein L24"/>
    <property type="match status" value="1"/>
</dbReference>
<dbReference type="Gene3D" id="2.30.30.30">
    <property type="match status" value="1"/>
</dbReference>
<dbReference type="HAMAP" id="MF_01326_B">
    <property type="entry name" value="Ribosomal_uL24_B"/>
    <property type="match status" value="1"/>
</dbReference>
<dbReference type="InterPro" id="IPR005824">
    <property type="entry name" value="KOW"/>
</dbReference>
<dbReference type="InterPro" id="IPR014722">
    <property type="entry name" value="Rib_uL2_dom2"/>
</dbReference>
<dbReference type="InterPro" id="IPR003256">
    <property type="entry name" value="Ribosomal_uL24"/>
</dbReference>
<dbReference type="InterPro" id="IPR005825">
    <property type="entry name" value="Ribosomal_uL24_CS"/>
</dbReference>
<dbReference type="InterPro" id="IPR041988">
    <property type="entry name" value="Ribosomal_uL24_KOW"/>
</dbReference>
<dbReference type="InterPro" id="IPR008991">
    <property type="entry name" value="Translation_prot_SH3-like_sf"/>
</dbReference>
<dbReference type="NCBIfam" id="TIGR01079">
    <property type="entry name" value="rplX_bact"/>
    <property type="match status" value="1"/>
</dbReference>
<dbReference type="PANTHER" id="PTHR12903">
    <property type="entry name" value="MITOCHONDRIAL RIBOSOMAL PROTEIN L24"/>
    <property type="match status" value="1"/>
</dbReference>
<dbReference type="Pfam" id="PF00467">
    <property type="entry name" value="KOW"/>
    <property type="match status" value="1"/>
</dbReference>
<dbReference type="Pfam" id="PF17136">
    <property type="entry name" value="ribosomal_L24"/>
    <property type="match status" value="1"/>
</dbReference>
<dbReference type="SMART" id="SM00739">
    <property type="entry name" value="KOW"/>
    <property type="match status" value="1"/>
</dbReference>
<dbReference type="SUPFAM" id="SSF50104">
    <property type="entry name" value="Translation proteins SH3-like domain"/>
    <property type="match status" value="1"/>
</dbReference>
<dbReference type="PROSITE" id="PS01108">
    <property type="entry name" value="RIBOSOMAL_L24"/>
    <property type="match status" value="1"/>
</dbReference>
<evidence type="ECO:0000255" key="1">
    <source>
        <dbReference type="HAMAP-Rule" id="MF_01326"/>
    </source>
</evidence>
<evidence type="ECO:0000305" key="2"/>
<proteinExistence type="inferred from homology"/>
<comment type="function">
    <text evidence="1">One of two assembly initiator proteins, it binds directly to the 5'-end of the 23S rRNA, where it nucleates assembly of the 50S subunit.</text>
</comment>
<comment type="function">
    <text evidence="1">One of the proteins that surrounds the polypeptide exit tunnel on the outside of the subunit.</text>
</comment>
<comment type="subunit">
    <text evidence="1">Part of the 50S ribosomal subunit.</text>
</comment>
<comment type="similarity">
    <text evidence="1">Belongs to the universal ribosomal protein uL24 family.</text>
</comment>
<gene>
    <name evidence="1" type="primary">rplX</name>
    <name type="ordered locus">Mjls_1055</name>
</gene>